<evidence type="ECO:0000255" key="1">
    <source>
        <dbReference type="HAMAP-Rule" id="MF_00358"/>
    </source>
</evidence>
<evidence type="ECO:0000256" key="2">
    <source>
        <dbReference type="SAM" id="MobiDB-lite"/>
    </source>
</evidence>
<evidence type="ECO:0000305" key="3"/>
<sequence>MPSVKVKENEPVDIAIRRFKRACEKAGVLSDVRKREFYEKPTQERKRKKAAAVKRYKKKLQRESIRTTRMY</sequence>
<protein>
    <recommendedName>
        <fullName evidence="1">Small ribosomal subunit protein bS21</fullName>
    </recommendedName>
    <alternativeName>
        <fullName evidence="3">30S ribosomal protein S21</fullName>
    </alternativeName>
</protein>
<comment type="similarity">
    <text evidence="1">Belongs to the bacterial ribosomal protein bS21 family.</text>
</comment>
<accession>A5WCC4</accession>
<name>RS21_PSYWF</name>
<organism>
    <name type="scientific">Psychrobacter sp. (strain PRwf-1)</name>
    <dbReference type="NCBI Taxonomy" id="349106"/>
    <lineage>
        <taxon>Bacteria</taxon>
        <taxon>Pseudomonadati</taxon>
        <taxon>Pseudomonadota</taxon>
        <taxon>Gammaproteobacteria</taxon>
        <taxon>Moraxellales</taxon>
        <taxon>Moraxellaceae</taxon>
        <taxon>Psychrobacter</taxon>
    </lineage>
</organism>
<proteinExistence type="inferred from homology"/>
<feature type="chain" id="PRO_1000072080" description="Small ribosomal subunit protein bS21">
    <location>
        <begin position="1"/>
        <end position="71"/>
    </location>
</feature>
<feature type="region of interest" description="Disordered" evidence="2">
    <location>
        <begin position="48"/>
        <end position="71"/>
    </location>
</feature>
<feature type="compositionally biased region" description="Basic residues" evidence="2">
    <location>
        <begin position="48"/>
        <end position="60"/>
    </location>
</feature>
<feature type="compositionally biased region" description="Basic and acidic residues" evidence="2">
    <location>
        <begin position="61"/>
        <end position="71"/>
    </location>
</feature>
<keyword id="KW-0687">Ribonucleoprotein</keyword>
<keyword id="KW-0689">Ribosomal protein</keyword>
<reference key="1">
    <citation type="submission" date="2007-05" db="EMBL/GenBank/DDBJ databases">
        <title>Complete sequence of chromosome of Psychrobacter sp. PRwf-1.</title>
        <authorList>
            <consortium name="US DOE Joint Genome Institute"/>
            <person name="Copeland A."/>
            <person name="Lucas S."/>
            <person name="Lapidus A."/>
            <person name="Barry K."/>
            <person name="Detter J.C."/>
            <person name="Glavina del Rio T."/>
            <person name="Hammon N."/>
            <person name="Israni S."/>
            <person name="Dalin E."/>
            <person name="Tice H."/>
            <person name="Pitluck S."/>
            <person name="Chain P."/>
            <person name="Malfatti S."/>
            <person name="Shin M."/>
            <person name="Vergez L."/>
            <person name="Schmutz J."/>
            <person name="Larimer F."/>
            <person name="Land M."/>
            <person name="Hauser L."/>
            <person name="Kyrpides N."/>
            <person name="Kim E."/>
            <person name="Tiedje J."/>
            <person name="Richardson P."/>
        </authorList>
    </citation>
    <scope>NUCLEOTIDE SEQUENCE [LARGE SCALE GENOMIC DNA]</scope>
    <source>
        <strain>PRwf-1</strain>
    </source>
</reference>
<gene>
    <name evidence="1" type="primary">rpsU</name>
    <name type="ordered locus">PsycPRwf_0360</name>
</gene>
<dbReference type="EMBL" id="CP000713">
    <property type="protein sequence ID" value="ABQ93315.1"/>
    <property type="molecule type" value="Genomic_DNA"/>
</dbReference>
<dbReference type="SMR" id="A5WCC4"/>
<dbReference type="STRING" id="349106.PsycPRwf_0360"/>
<dbReference type="KEGG" id="prw:PsycPRwf_0360"/>
<dbReference type="eggNOG" id="COG0828">
    <property type="taxonomic scope" value="Bacteria"/>
</dbReference>
<dbReference type="HOGENOM" id="CLU_159258_1_0_6"/>
<dbReference type="GO" id="GO:1990904">
    <property type="term" value="C:ribonucleoprotein complex"/>
    <property type="evidence" value="ECO:0007669"/>
    <property type="project" value="UniProtKB-KW"/>
</dbReference>
<dbReference type="GO" id="GO:0005840">
    <property type="term" value="C:ribosome"/>
    <property type="evidence" value="ECO:0007669"/>
    <property type="project" value="UniProtKB-KW"/>
</dbReference>
<dbReference type="GO" id="GO:0003735">
    <property type="term" value="F:structural constituent of ribosome"/>
    <property type="evidence" value="ECO:0007669"/>
    <property type="project" value="InterPro"/>
</dbReference>
<dbReference type="GO" id="GO:0006412">
    <property type="term" value="P:translation"/>
    <property type="evidence" value="ECO:0007669"/>
    <property type="project" value="UniProtKB-UniRule"/>
</dbReference>
<dbReference type="Gene3D" id="1.20.5.1150">
    <property type="entry name" value="Ribosomal protein S8"/>
    <property type="match status" value="1"/>
</dbReference>
<dbReference type="HAMAP" id="MF_00358">
    <property type="entry name" value="Ribosomal_bS21"/>
    <property type="match status" value="1"/>
</dbReference>
<dbReference type="InterPro" id="IPR001911">
    <property type="entry name" value="Ribosomal_bS21"/>
</dbReference>
<dbReference type="InterPro" id="IPR018278">
    <property type="entry name" value="Ribosomal_bS21_CS"/>
</dbReference>
<dbReference type="InterPro" id="IPR038380">
    <property type="entry name" value="Ribosomal_bS21_sf"/>
</dbReference>
<dbReference type="NCBIfam" id="TIGR00030">
    <property type="entry name" value="S21p"/>
    <property type="match status" value="1"/>
</dbReference>
<dbReference type="PANTHER" id="PTHR21109">
    <property type="entry name" value="MITOCHONDRIAL 28S RIBOSOMAL PROTEIN S21"/>
    <property type="match status" value="1"/>
</dbReference>
<dbReference type="PANTHER" id="PTHR21109:SF22">
    <property type="entry name" value="SMALL RIBOSOMAL SUBUNIT PROTEIN BS21"/>
    <property type="match status" value="1"/>
</dbReference>
<dbReference type="Pfam" id="PF01165">
    <property type="entry name" value="Ribosomal_S21"/>
    <property type="match status" value="1"/>
</dbReference>
<dbReference type="PRINTS" id="PR00976">
    <property type="entry name" value="RIBOSOMALS21"/>
</dbReference>
<dbReference type="PROSITE" id="PS01181">
    <property type="entry name" value="RIBOSOMAL_S21"/>
    <property type="match status" value="1"/>
</dbReference>